<proteinExistence type="inferred from homology"/>
<accession>P0A6E8</accession>
<accession>P00832</accession>
<protein>
    <recommendedName>
        <fullName>ATP synthase epsilon chain</fullName>
    </recommendedName>
    <alternativeName>
        <fullName>ATP synthase F1 sector epsilon subunit</fullName>
    </alternativeName>
    <alternativeName>
        <fullName>F-ATPase epsilon subunit</fullName>
    </alternativeName>
</protein>
<comment type="function">
    <text evidence="1">Produces ATP from ADP in the presence of a proton gradient across the membrane.</text>
</comment>
<comment type="subunit">
    <text>F-type ATPases have 2 components, CF(1) - the catalytic core - and CF(0) - the membrane proton channel. CF(1) has five subunits: alpha(3), beta(3), gamma(1), delta(1), epsilon(1). CF(0) has three main subunits: a, b and c.</text>
</comment>
<comment type="subcellular location">
    <subcellularLocation>
        <location evidence="1">Cell inner membrane</location>
        <topology evidence="1">Peripheral membrane protein</topology>
    </subcellularLocation>
</comment>
<comment type="similarity">
    <text evidence="2">Belongs to the ATPase epsilon chain family.</text>
</comment>
<comment type="sequence caution" evidence="2">
    <conflict type="erroneous initiation">
        <sequence resource="EMBL-CDS" id="AAN45251"/>
    </conflict>
    <text>Truncated N-terminus.</text>
</comment>
<comment type="sequence caution" evidence="2">
    <conflict type="erroneous initiation">
        <sequence resource="EMBL-CDS" id="AAP18946"/>
    </conflict>
    <text>Truncated N-terminus.</text>
</comment>
<reference key="1">
    <citation type="journal article" date="2002" name="Nucleic Acids Res.">
        <title>Genome sequence of Shigella flexneri 2a: insights into pathogenicity through comparison with genomes of Escherichia coli K12 and O157.</title>
        <authorList>
            <person name="Jin Q."/>
            <person name="Yuan Z."/>
            <person name="Xu J."/>
            <person name="Wang Y."/>
            <person name="Shen Y."/>
            <person name="Lu W."/>
            <person name="Wang J."/>
            <person name="Liu H."/>
            <person name="Yang J."/>
            <person name="Yang F."/>
            <person name="Zhang X."/>
            <person name="Zhang J."/>
            <person name="Yang G."/>
            <person name="Wu H."/>
            <person name="Qu D."/>
            <person name="Dong J."/>
            <person name="Sun L."/>
            <person name="Xue Y."/>
            <person name="Zhao A."/>
            <person name="Gao Y."/>
            <person name="Zhu J."/>
            <person name="Kan B."/>
            <person name="Ding K."/>
            <person name="Chen S."/>
            <person name="Cheng H."/>
            <person name="Yao Z."/>
            <person name="He B."/>
            <person name="Chen R."/>
            <person name="Ma D."/>
            <person name="Qiang B."/>
            <person name="Wen Y."/>
            <person name="Hou Y."/>
            <person name="Yu J."/>
        </authorList>
    </citation>
    <scope>NUCLEOTIDE SEQUENCE [LARGE SCALE GENOMIC DNA]</scope>
    <source>
        <strain>301 / Serotype 2a</strain>
    </source>
</reference>
<reference key="2">
    <citation type="journal article" date="2003" name="Infect. Immun.">
        <title>Complete genome sequence and comparative genomics of Shigella flexneri serotype 2a strain 2457T.</title>
        <authorList>
            <person name="Wei J."/>
            <person name="Goldberg M.B."/>
            <person name="Burland V."/>
            <person name="Venkatesan M.M."/>
            <person name="Deng W."/>
            <person name="Fournier G."/>
            <person name="Mayhew G.F."/>
            <person name="Plunkett G. III"/>
            <person name="Rose D.J."/>
            <person name="Darling A."/>
            <person name="Mau B."/>
            <person name="Perna N.T."/>
            <person name="Payne S.M."/>
            <person name="Runyen-Janecky L.J."/>
            <person name="Zhou S."/>
            <person name="Schwartz D.C."/>
            <person name="Blattner F.R."/>
        </authorList>
    </citation>
    <scope>NUCLEOTIDE SEQUENCE [LARGE SCALE GENOMIC DNA]</scope>
    <source>
        <strain>ATCC 700930 / 2457T / Serotype 2a</strain>
    </source>
</reference>
<evidence type="ECO:0000250" key="1"/>
<evidence type="ECO:0000305" key="2"/>
<gene>
    <name type="primary">atpC</name>
    <name type="synonym">papG</name>
    <name type="synonym">uncC</name>
    <name type="ordered locus">SF3811</name>
    <name type="ordered locus">S3957</name>
</gene>
<dbReference type="EMBL" id="AE005674">
    <property type="protein sequence ID" value="AAN45251.2"/>
    <property type="status" value="ALT_INIT"/>
    <property type="molecule type" value="Genomic_DNA"/>
</dbReference>
<dbReference type="EMBL" id="AE014073">
    <property type="protein sequence ID" value="AAP18946.1"/>
    <property type="status" value="ALT_INIT"/>
    <property type="molecule type" value="Genomic_DNA"/>
</dbReference>
<dbReference type="RefSeq" id="NP_709544.2">
    <property type="nucleotide sequence ID" value="NC_004337.2"/>
</dbReference>
<dbReference type="RefSeq" id="WP_001251965.1">
    <property type="nucleotide sequence ID" value="NZ_WPGW01000050.1"/>
</dbReference>
<dbReference type="SMR" id="P0A6E8"/>
<dbReference type="STRING" id="198214.SF3811"/>
<dbReference type="PaxDb" id="198214-SF3811"/>
<dbReference type="GeneID" id="1026069"/>
<dbReference type="KEGG" id="sfl:SF3811"/>
<dbReference type="KEGG" id="sfx:S3957"/>
<dbReference type="PATRIC" id="fig|198214.7.peg.4498"/>
<dbReference type="HOGENOM" id="CLU_084338_2_0_6"/>
<dbReference type="Proteomes" id="UP000001006">
    <property type="component" value="Chromosome"/>
</dbReference>
<dbReference type="Proteomes" id="UP000002673">
    <property type="component" value="Chromosome"/>
</dbReference>
<dbReference type="GO" id="GO:0005886">
    <property type="term" value="C:plasma membrane"/>
    <property type="evidence" value="ECO:0007669"/>
    <property type="project" value="UniProtKB-SubCell"/>
</dbReference>
<dbReference type="GO" id="GO:0045259">
    <property type="term" value="C:proton-transporting ATP synthase complex"/>
    <property type="evidence" value="ECO:0007669"/>
    <property type="project" value="UniProtKB-KW"/>
</dbReference>
<dbReference type="GO" id="GO:0005524">
    <property type="term" value="F:ATP binding"/>
    <property type="evidence" value="ECO:0007669"/>
    <property type="project" value="UniProtKB-UniRule"/>
</dbReference>
<dbReference type="GO" id="GO:0046933">
    <property type="term" value="F:proton-transporting ATP synthase activity, rotational mechanism"/>
    <property type="evidence" value="ECO:0007669"/>
    <property type="project" value="UniProtKB-UniRule"/>
</dbReference>
<dbReference type="CDD" id="cd12152">
    <property type="entry name" value="F1-ATPase_delta"/>
    <property type="match status" value="1"/>
</dbReference>
<dbReference type="FunFam" id="1.20.5.440:FF:000001">
    <property type="entry name" value="ATP synthase epsilon chain"/>
    <property type="match status" value="1"/>
</dbReference>
<dbReference type="FunFam" id="2.60.15.10:FF:000001">
    <property type="entry name" value="ATP synthase epsilon chain"/>
    <property type="match status" value="1"/>
</dbReference>
<dbReference type="Gene3D" id="1.20.5.440">
    <property type="entry name" value="ATP synthase delta/epsilon subunit, C-terminal domain"/>
    <property type="match status" value="1"/>
</dbReference>
<dbReference type="Gene3D" id="2.60.15.10">
    <property type="entry name" value="F0F1 ATP synthase delta/epsilon subunit, N-terminal"/>
    <property type="match status" value="1"/>
</dbReference>
<dbReference type="HAMAP" id="MF_00530">
    <property type="entry name" value="ATP_synth_epsil_bac"/>
    <property type="match status" value="1"/>
</dbReference>
<dbReference type="InterPro" id="IPR036794">
    <property type="entry name" value="ATP_F1_dsu/esu_C_sf"/>
</dbReference>
<dbReference type="InterPro" id="IPR001469">
    <property type="entry name" value="ATP_synth_F1_dsu/esu"/>
</dbReference>
<dbReference type="InterPro" id="IPR020546">
    <property type="entry name" value="ATP_synth_F1_dsu/esu_N"/>
</dbReference>
<dbReference type="InterPro" id="IPR020547">
    <property type="entry name" value="ATP_synth_F1_esu_C"/>
</dbReference>
<dbReference type="InterPro" id="IPR036771">
    <property type="entry name" value="ATPsynth_dsu/esu_N"/>
</dbReference>
<dbReference type="NCBIfam" id="TIGR01216">
    <property type="entry name" value="ATP_synt_epsi"/>
    <property type="match status" value="1"/>
</dbReference>
<dbReference type="NCBIfam" id="NF001847">
    <property type="entry name" value="PRK00571.1-4"/>
    <property type="match status" value="1"/>
</dbReference>
<dbReference type="PANTHER" id="PTHR13822">
    <property type="entry name" value="ATP SYNTHASE DELTA/EPSILON CHAIN"/>
    <property type="match status" value="1"/>
</dbReference>
<dbReference type="PANTHER" id="PTHR13822:SF10">
    <property type="entry name" value="ATP SYNTHASE EPSILON CHAIN, CHLOROPLASTIC"/>
    <property type="match status" value="1"/>
</dbReference>
<dbReference type="Pfam" id="PF00401">
    <property type="entry name" value="ATP-synt_DE"/>
    <property type="match status" value="1"/>
</dbReference>
<dbReference type="Pfam" id="PF02823">
    <property type="entry name" value="ATP-synt_DE_N"/>
    <property type="match status" value="1"/>
</dbReference>
<dbReference type="SUPFAM" id="SSF46604">
    <property type="entry name" value="Epsilon subunit of F1F0-ATP synthase C-terminal domain"/>
    <property type="match status" value="1"/>
</dbReference>
<dbReference type="SUPFAM" id="SSF51344">
    <property type="entry name" value="Epsilon subunit of F1F0-ATP synthase N-terminal domain"/>
    <property type="match status" value="1"/>
</dbReference>
<sequence>MAMTYHLDVVSAEQQMFSGLVEKIQVTGSEGELGIYPGHAPLLTAIKPGMIRIVKQHGHEEFIYLSGGILEVQPGNVTVLADTAIRGQDLDEARAMEAKRKAEEHISSSHGDVDYAQASAELAKAIAQLRVIELTKKAM</sequence>
<name>ATPE_SHIFL</name>
<keyword id="KW-0066">ATP synthesis</keyword>
<keyword id="KW-0997">Cell inner membrane</keyword>
<keyword id="KW-1003">Cell membrane</keyword>
<keyword id="KW-0139">CF(1)</keyword>
<keyword id="KW-0375">Hydrogen ion transport</keyword>
<keyword id="KW-0406">Ion transport</keyword>
<keyword id="KW-0472">Membrane</keyword>
<keyword id="KW-1185">Reference proteome</keyword>
<keyword id="KW-0813">Transport</keyword>
<organism>
    <name type="scientific">Shigella flexneri</name>
    <dbReference type="NCBI Taxonomy" id="623"/>
    <lineage>
        <taxon>Bacteria</taxon>
        <taxon>Pseudomonadati</taxon>
        <taxon>Pseudomonadota</taxon>
        <taxon>Gammaproteobacteria</taxon>
        <taxon>Enterobacterales</taxon>
        <taxon>Enterobacteriaceae</taxon>
        <taxon>Shigella</taxon>
    </lineage>
</organism>
<feature type="initiator methionine" description="Removed" evidence="1">
    <location>
        <position position="1"/>
    </location>
</feature>
<feature type="chain" id="PRO_0000188199" description="ATP synthase epsilon chain">
    <location>
        <begin position="2"/>
        <end position="139"/>
    </location>
</feature>